<evidence type="ECO:0000255" key="1">
    <source>
        <dbReference type="HAMAP-Rule" id="MF_00044"/>
    </source>
</evidence>
<evidence type="ECO:0000256" key="2">
    <source>
        <dbReference type="SAM" id="MobiDB-lite"/>
    </source>
</evidence>
<name>SYDND_KINRD</name>
<proteinExistence type="inferred from homology"/>
<sequence>MLRTHEAGSLRADHAGQTVTLTGWVARRRDHGGVAFLDLRDASGVVQVVARDEILDAGGARELRNEYCIRITGDVRLRPEGNDNANIPTGAVEVDTTALEVLSEAAPLPFQIDDHLNVGEEARLKHRYLDLRRTGPANALKLRSAANRAARAVLEEHAFTEIETPTLTRSTPEGARDFLVPARLAPGSWYALPQSPQLFKQLLMVAGMERYYQLARCYRDEDFRADRQPEFTQLDIEMSFVEQDDVIALGEQIVAALWKLIGHDVPLPLPRMTYEEAMRRYGSDKPDLRFGLELVECAGFFADTTFRVFQAPYVGAVVMPGGASQPRKTLDAWQEWAKQRGARGLAYVLVGQDGELSGPVAKNLSDTERAGLAAHVGANPGDCIFFAAGAVNPSRALLGAARAEIARRTGAIDESAWSFLWVVDAPMFKSAAEDDDVSIGEGSWNAVHHAFTAPKPEVVDTFDTDPGSALSNAYDIVCNGNEIGGGSIRIHRRDVQERVFAVMGISEADAREKFGFLLDAFSFGAPPHGGIAFGWDRVVALLAGVDSIREVIAFPKSGGGYDPLTAAPAPITAQQRKEAGVDAKPETKKAAAGEPAGA</sequence>
<keyword id="KW-0030">Aminoacyl-tRNA synthetase</keyword>
<keyword id="KW-0067">ATP-binding</keyword>
<keyword id="KW-0963">Cytoplasm</keyword>
<keyword id="KW-0436">Ligase</keyword>
<keyword id="KW-0547">Nucleotide-binding</keyword>
<keyword id="KW-0648">Protein biosynthesis</keyword>
<keyword id="KW-1185">Reference proteome</keyword>
<dbReference type="EC" id="6.1.1.23" evidence="1"/>
<dbReference type="EMBL" id="CP000750">
    <property type="protein sequence ID" value="ABS04504.1"/>
    <property type="molecule type" value="Genomic_DNA"/>
</dbReference>
<dbReference type="RefSeq" id="WP_012087245.1">
    <property type="nucleotide sequence ID" value="NC_009664.2"/>
</dbReference>
<dbReference type="SMR" id="A6WCG5"/>
<dbReference type="STRING" id="266940.Krad_3040"/>
<dbReference type="KEGG" id="kra:Krad_3040"/>
<dbReference type="eggNOG" id="COG0173">
    <property type="taxonomic scope" value="Bacteria"/>
</dbReference>
<dbReference type="HOGENOM" id="CLU_014330_3_2_11"/>
<dbReference type="OrthoDB" id="9802326at2"/>
<dbReference type="Proteomes" id="UP000001116">
    <property type="component" value="Chromosome"/>
</dbReference>
<dbReference type="GO" id="GO:0005737">
    <property type="term" value="C:cytoplasm"/>
    <property type="evidence" value="ECO:0007669"/>
    <property type="project" value="UniProtKB-SubCell"/>
</dbReference>
<dbReference type="GO" id="GO:0004815">
    <property type="term" value="F:aspartate-tRNA ligase activity"/>
    <property type="evidence" value="ECO:0007669"/>
    <property type="project" value="UniProtKB-UniRule"/>
</dbReference>
<dbReference type="GO" id="GO:0050560">
    <property type="term" value="F:aspartate-tRNA(Asn) ligase activity"/>
    <property type="evidence" value="ECO:0007669"/>
    <property type="project" value="UniProtKB-EC"/>
</dbReference>
<dbReference type="GO" id="GO:0005524">
    <property type="term" value="F:ATP binding"/>
    <property type="evidence" value="ECO:0007669"/>
    <property type="project" value="UniProtKB-UniRule"/>
</dbReference>
<dbReference type="GO" id="GO:0003676">
    <property type="term" value="F:nucleic acid binding"/>
    <property type="evidence" value="ECO:0007669"/>
    <property type="project" value="InterPro"/>
</dbReference>
<dbReference type="GO" id="GO:0006422">
    <property type="term" value="P:aspartyl-tRNA aminoacylation"/>
    <property type="evidence" value="ECO:0007669"/>
    <property type="project" value="UniProtKB-UniRule"/>
</dbReference>
<dbReference type="CDD" id="cd00777">
    <property type="entry name" value="AspRS_core"/>
    <property type="match status" value="1"/>
</dbReference>
<dbReference type="CDD" id="cd04317">
    <property type="entry name" value="EcAspRS_like_N"/>
    <property type="match status" value="1"/>
</dbReference>
<dbReference type="Gene3D" id="3.30.930.10">
    <property type="entry name" value="Bira Bifunctional Protein, Domain 2"/>
    <property type="match status" value="1"/>
</dbReference>
<dbReference type="Gene3D" id="3.30.1360.30">
    <property type="entry name" value="GAD-like domain"/>
    <property type="match status" value="1"/>
</dbReference>
<dbReference type="Gene3D" id="2.40.50.140">
    <property type="entry name" value="Nucleic acid-binding proteins"/>
    <property type="match status" value="1"/>
</dbReference>
<dbReference type="HAMAP" id="MF_00044">
    <property type="entry name" value="Asp_tRNA_synth_type1"/>
    <property type="match status" value="1"/>
</dbReference>
<dbReference type="InterPro" id="IPR004364">
    <property type="entry name" value="Aa-tRNA-synt_II"/>
</dbReference>
<dbReference type="InterPro" id="IPR006195">
    <property type="entry name" value="aa-tRNA-synth_II"/>
</dbReference>
<dbReference type="InterPro" id="IPR045864">
    <property type="entry name" value="aa-tRNA-synth_II/BPL/LPL"/>
</dbReference>
<dbReference type="InterPro" id="IPR004524">
    <property type="entry name" value="Asp-tRNA-ligase_1"/>
</dbReference>
<dbReference type="InterPro" id="IPR047089">
    <property type="entry name" value="Asp-tRNA-ligase_1_N"/>
</dbReference>
<dbReference type="InterPro" id="IPR002312">
    <property type="entry name" value="Asp/Asn-tRNA-synth_IIb"/>
</dbReference>
<dbReference type="InterPro" id="IPR047090">
    <property type="entry name" value="AspRS_core"/>
</dbReference>
<dbReference type="InterPro" id="IPR004115">
    <property type="entry name" value="GAD-like_sf"/>
</dbReference>
<dbReference type="InterPro" id="IPR029351">
    <property type="entry name" value="GAD_dom"/>
</dbReference>
<dbReference type="InterPro" id="IPR012340">
    <property type="entry name" value="NA-bd_OB-fold"/>
</dbReference>
<dbReference type="InterPro" id="IPR004365">
    <property type="entry name" value="NA-bd_OB_tRNA"/>
</dbReference>
<dbReference type="NCBIfam" id="TIGR00459">
    <property type="entry name" value="aspS_bact"/>
    <property type="match status" value="1"/>
</dbReference>
<dbReference type="NCBIfam" id="NF001750">
    <property type="entry name" value="PRK00476.1"/>
    <property type="match status" value="1"/>
</dbReference>
<dbReference type="PANTHER" id="PTHR22594:SF5">
    <property type="entry name" value="ASPARTATE--TRNA LIGASE, MITOCHONDRIAL"/>
    <property type="match status" value="1"/>
</dbReference>
<dbReference type="PANTHER" id="PTHR22594">
    <property type="entry name" value="ASPARTYL/LYSYL-TRNA SYNTHETASE"/>
    <property type="match status" value="1"/>
</dbReference>
<dbReference type="Pfam" id="PF02938">
    <property type="entry name" value="GAD"/>
    <property type="match status" value="1"/>
</dbReference>
<dbReference type="Pfam" id="PF00152">
    <property type="entry name" value="tRNA-synt_2"/>
    <property type="match status" value="1"/>
</dbReference>
<dbReference type="Pfam" id="PF01336">
    <property type="entry name" value="tRNA_anti-codon"/>
    <property type="match status" value="1"/>
</dbReference>
<dbReference type="PRINTS" id="PR01042">
    <property type="entry name" value="TRNASYNTHASP"/>
</dbReference>
<dbReference type="SUPFAM" id="SSF55681">
    <property type="entry name" value="Class II aaRS and biotin synthetases"/>
    <property type="match status" value="1"/>
</dbReference>
<dbReference type="SUPFAM" id="SSF55261">
    <property type="entry name" value="GAD domain-like"/>
    <property type="match status" value="1"/>
</dbReference>
<dbReference type="SUPFAM" id="SSF50249">
    <property type="entry name" value="Nucleic acid-binding proteins"/>
    <property type="match status" value="1"/>
</dbReference>
<dbReference type="PROSITE" id="PS50862">
    <property type="entry name" value="AA_TRNA_LIGASE_II"/>
    <property type="match status" value="1"/>
</dbReference>
<comment type="function">
    <text evidence="1">Aspartyl-tRNA synthetase with relaxed tRNA specificity since it is able to aspartylate not only its cognate tRNA(Asp) but also tRNA(Asn). Reaction proceeds in two steps: L-aspartate is first activated by ATP to form Asp-AMP and then transferred to the acceptor end of tRNA(Asp/Asn).</text>
</comment>
<comment type="catalytic activity">
    <reaction evidence="1">
        <text>tRNA(Asx) + L-aspartate + ATP = L-aspartyl-tRNA(Asx) + AMP + diphosphate</text>
        <dbReference type="Rhea" id="RHEA:18349"/>
        <dbReference type="Rhea" id="RHEA-COMP:9710"/>
        <dbReference type="Rhea" id="RHEA-COMP:9711"/>
        <dbReference type="ChEBI" id="CHEBI:29991"/>
        <dbReference type="ChEBI" id="CHEBI:30616"/>
        <dbReference type="ChEBI" id="CHEBI:33019"/>
        <dbReference type="ChEBI" id="CHEBI:78442"/>
        <dbReference type="ChEBI" id="CHEBI:78516"/>
        <dbReference type="ChEBI" id="CHEBI:456215"/>
        <dbReference type="EC" id="6.1.1.23"/>
    </reaction>
</comment>
<comment type="subunit">
    <text evidence="1">Homodimer.</text>
</comment>
<comment type="subcellular location">
    <subcellularLocation>
        <location evidence="1">Cytoplasm</location>
    </subcellularLocation>
</comment>
<comment type="similarity">
    <text evidence="1">Belongs to the class-II aminoacyl-tRNA synthetase family. Type 1 subfamily.</text>
</comment>
<reference key="1">
    <citation type="journal article" date="2008" name="PLoS ONE">
        <title>Survival in nuclear waste, extreme resistance, and potential applications gleaned from the genome sequence of Kineococcus radiotolerans SRS30216.</title>
        <authorList>
            <person name="Bagwell C.E."/>
            <person name="Bhat S."/>
            <person name="Hawkins G.M."/>
            <person name="Smith B.W."/>
            <person name="Biswas T."/>
            <person name="Hoover T.R."/>
            <person name="Saunders E."/>
            <person name="Han C.S."/>
            <person name="Tsodikov O.V."/>
            <person name="Shimkets L.J."/>
        </authorList>
    </citation>
    <scope>NUCLEOTIDE SEQUENCE [LARGE SCALE GENOMIC DNA]</scope>
    <source>
        <strain>ATCC BAA-149 / DSM 14245 / SRS30216</strain>
    </source>
</reference>
<gene>
    <name evidence="1" type="primary">aspS</name>
    <name type="ordered locus">Krad_3040</name>
</gene>
<organism>
    <name type="scientific">Kineococcus radiotolerans (strain ATCC BAA-149 / DSM 14245 / SRS30216)</name>
    <dbReference type="NCBI Taxonomy" id="266940"/>
    <lineage>
        <taxon>Bacteria</taxon>
        <taxon>Bacillati</taxon>
        <taxon>Actinomycetota</taxon>
        <taxon>Actinomycetes</taxon>
        <taxon>Kineosporiales</taxon>
        <taxon>Kineosporiaceae</taxon>
        <taxon>Kineococcus</taxon>
    </lineage>
</organism>
<feature type="chain" id="PRO_1000074707" description="Aspartate--tRNA(Asp/Asn) ligase">
    <location>
        <begin position="1"/>
        <end position="598"/>
    </location>
</feature>
<feature type="region of interest" description="Aspartate" evidence="1">
    <location>
        <begin position="197"/>
        <end position="200"/>
    </location>
</feature>
<feature type="region of interest" description="Disordered" evidence="2">
    <location>
        <begin position="560"/>
        <end position="598"/>
    </location>
</feature>
<feature type="compositionally biased region" description="Basic and acidic residues" evidence="2">
    <location>
        <begin position="575"/>
        <end position="591"/>
    </location>
</feature>
<feature type="binding site" evidence="1">
    <location>
        <position position="173"/>
    </location>
    <ligand>
        <name>L-aspartate</name>
        <dbReference type="ChEBI" id="CHEBI:29991"/>
    </ligand>
</feature>
<feature type="binding site" evidence="1">
    <location>
        <begin position="219"/>
        <end position="221"/>
    </location>
    <ligand>
        <name>ATP</name>
        <dbReference type="ChEBI" id="CHEBI:30616"/>
    </ligand>
</feature>
<feature type="binding site" evidence="1">
    <location>
        <position position="219"/>
    </location>
    <ligand>
        <name>L-aspartate</name>
        <dbReference type="ChEBI" id="CHEBI:29991"/>
    </ligand>
</feature>
<feature type="binding site" evidence="1">
    <location>
        <position position="228"/>
    </location>
    <ligand>
        <name>ATP</name>
        <dbReference type="ChEBI" id="CHEBI:30616"/>
    </ligand>
</feature>
<feature type="binding site" evidence="1">
    <location>
        <position position="448"/>
    </location>
    <ligand>
        <name>L-aspartate</name>
        <dbReference type="ChEBI" id="CHEBI:29991"/>
    </ligand>
</feature>
<feature type="binding site" evidence="1">
    <location>
        <position position="482"/>
    </location>
    <ligand>
        <name>ATP</name>
        <dbReference type="ChEBI" id="CHEBI:30616"/>
    </ligand>
</feature>
<feature type="binding site" evidence="1">
    <location>
        <position position="489"/>
    </location>
    <ligand>
        <name>L-aspartate</name>
        <dbReference type="ChEBI" id="CHEBI:29991"/>
    </ligand>
</feature>
<feature type="binding site" evidence="1">
    <location>
        <begin position="534"/>
        <end position="537"/>
    </location>
    <ligand>
        <name>ATP</name>
        <dbReference type="ChEBI" id="CHEBI:30616"/>
    </ligand>
</feature>
<feature type="site" description="Important for tRNA non-discrimination" evidence="1">
    <location>
        <position position="31"/>
    </location>
</feature>
<feature type="site" description="Important for tRNA non-discrimination" evidence="1">
    <location>
        <position position="81"/>
    </location>
</feature>
<accession>A6WCG5</accession>
<protein>
    <recommendedName>
        <fullName evidence="1">Aspartate--tRNA(Asp/Asn) ligase</fullName>
        <ecNumber evidence="1">6.1.1.23</ecNumber>
    </recommendedName>
    <alternativeName>
        <fullName evidence="1">Aspartyl-tRNA synthetase</fullName>
        <shortName evidence="1">AspRS</shortName>
    </alternativeName>
    <alternativeName>
        <fullName evidence="1">Non-discriminating aspartyl-tRNA synthetase</fullName>
        <shortName evidence="1">ND-AspRS</shortName>
    </alternativeName>
</protein>